<organism>
    <name type="scientific">Staphylococcus aureus (strain JH1)</name>
    <dbReference type="NCBI Taxonomy" id="359787"/>
    <lineage>
        <taxon>Bacteria</taxon>
        <taxon>Bacillati</taxon>
        <taxon>Bacillota</taxon>
        <taxon>Bacilli</taxon>
        <taxon>Bacillales</taxon>
        <taxon>Staphylococcaceae</taxon>
        <taxon>Staphylococcus</taxon>
    </lineage>
</organism>
<gene>
    <name evidence="1" type="primary">rpsG</name>
    <name type="ordered locus">SaurJH1_0583</name>
</gene>
<evidence type="ECO:0000255" key="1">
    <source>
        <dbReference type="HAMAP-Rule" id="MF_00480"/>
    </source>
</evidence>
<evidence type="ECO:0000305" key="2"/>
<keyword id="KW-0687">Ribonucleoprotein</keyword>
<keyword id="KW-0689">Ribosomal protein</keyword>
<keyword id="KW-0694">RNA-binding</keyword>
<keyword id="KW-0699">rRNA-binding</keyword>
<keyword id="KW-0820">tRNA-binding</keyword>
<sequence>MPRKGSVPKRDVLPDPIHNSKLVTKLINKIMLDGKRGTAQRILYSAFDLVEQRSGRDALEVFEEAINNIMPVLEVKARRVGGSNYQVPVEVRPERRTTLGLRWLVNYARLRGEKTMEDRLANEILDAANNTGGAVKKREDTHKMAEANKAFAHYRW</sequence>
<feature type="chain" id="PRO_1000081307" description="Small ribosomal subunit protein uS7">
    <location>
        <begin position="1"/>
        <end position="156"/>
    </location>
</feature>
<protein>
    <recommendedName>
        <fullName evidence="1">Small ribosomal subunit protein uS7</fullName>
    </recommendedName>
    <alternativeName>
        <fullName evidence="2">30S ribosomal protein S7</fullName>
    </alternativeName>
</protein>
<comment type="function">
    <text evidence="1">One of the primary rRNA binding proteins, it binds directly to 16S rRNA where it nucleates assembly of the head domain of the 30S subunit. Is located at the subunit interface close to the decoding center, probably blocks exit of the E-site tRNA.</text>
</comment>
<comment type="subunit">
    <text evidence="1">Part of the 30S ribosomal subunit. Contacts proteins S9 and S11.</text>
</comment>
<comment type="similarity">
    <text evidence="1">Belongs to the universal ribosomal protein uS7 family.</text>
</comment>
<accession>A6TZ23</accession>
<dbReference type="EMBL" id="CP000736">
    <property type="protein sequence ID" value="ABR51441.1"/>
    <property type="molecule type" value="Genomic_DNA"/>
</dbReference>
<dbReference type="SMR" id="A6TZ23"/>
<dbReference type="KEGG" id="sah:SaurJH1_0583"/>
<dbReference type="HOGENOM" id="CLU_072226_1_1_9"/>
<dbReference type="GO" id="GO:0015935">
    <property type="term" value="C:small ribosomal subunit"/>
    <property type="evidence" value="ECO:0007669"/>
    <property type="project" value="InterPro"/>
</dbReference>
<dbReference type="GO" id="GO:0019843">
    <property type="term" value="F:rRNA binding"/>
    <property type="evidence" value="ECO:0007669"/>
    <property type="project" value="UniProtKB-UniRule"/>
</dbReference>
<dbReference type="GO" id="GO:0003735">
    <property type="term" value="F:structural constituent of ribosome"/>
    <property type="evidence" value="ECO:0007669"/>
    <property type="project" value="InterPro"/>
</dbReference>
<dbReference type="GO" id="GO:0000049">
    <property type="term" value="F:tRNA binding"/>
    <property type="evidence" value="ECO:0007669"/>
    <property type="project" value="UniProtKB-UniRule"/>
</dbReference>
<dbReference type="GO" id="GO:0006412">
    <property type="term" value="P:translation"/>
    <property type="evidence" value="ECO:0007669"/>
    <property type="project" value="UniProtKB-UniRule"/>
</dbReference>
<dbReference type="CDD" id="cd14869">
    <property type="entry name" value="uS7_Bacteria"/>
    <property type="match status" value="1"/>
</dbReference>
<dbReference type="FunFam" id="1.10.455.10:FF:000001">
    <property type="entry name" value="30S ribosomal protein S7"/>
    <property type="match status" value="1"/>
</dbReference>
<dbReference type="Gene3D" id="1.10.455.10">
    <property type="entry name" value="Ribosomal protein S7 domain"/>
    <property type="match status" value="1"/>
</dbReference>
<dbReference type="HAMAP" id="MF_00480_B">
    <property type="entry name" value="Ribosomal_uS7_B"/>
    <property type="match status" value="1"/>
</dbReference>
<dbReference type="InterPro" id="IPR000235">
    <property type="entry name" value="Ribosomal_uS7"/>
</dbReference>
<dbReference type="InterPro" id="IPR005717">
    <property type="entry name" value="Ribosomal_uS7_bac/org-type"/>
</dbReference>
<dbReference type="InterPro" id="IPR020606">
    <property type="entry name" value="Ribosomal_uS7_CS"/>
</dbReference>
<dbReference type="InterPro" id="IPR023798">
    <property type="entry name" value="Ribosomal_uS7_dom"/>
</dbReference>
<dbReference type="InterPro" id="IPR036823">
    <property type="entry name" value="Ribosomal_uS7_dom_sf"/>
</dbReference>
<dbReference type="NCBIfam" id="TIGR01029">
    <property type="entry name" value="rpsG_bact"/>
    <property type="match status" value="1"/>
</dbReference>
<dbReference type="PANTHER" id="PTHR11205">
    <property type="entry name" value="RIBOSOMAL PROTEIN S7"/>
    <property type="match status" value="1"/>
</dbReference>
<dbReference type="Pfam" id="PF00177">
    <property type="entry name" value="Ribosomal_S7"/>
    <property type="match status" value="1"/>
</dbReference>
<dbReference type="PIRSF" id="PIRSF002122">
    <property type="entry name" value="RPS7p_RPS7a_RPS5e_RPS7o"/>
    <property type="match status" value="1"/>
</dbReference>
<dbReference type="SUPFAM" id="SSF47973">
    <property type="entry name" value="Ribosomal protein S7"/>
    <property type="match status" value="1"/>
</dbReference>
<dbReference type="PROSITE" id="PS00052">
    <property type="entry name" value="RIBOSOMAL_S7"/>
    <property type="match status" value="1"/>
</dbReference>
<proteinExistence type="inferred from homology"/>
<reference key="1">
    <citation type="submission" date="2007-06" db="EMBL/GenBank/DDBJ databases">
        <title>Complete sequence of chromosome of Staphylococcus aureus subsp. aureus JH1.</title>
        <authorList>
            <consortium name="US DOE Joint Genome Institute"/>
            <person name="Copeland A."/>
            <person name="Lucas S."/>
            <person name="Lapidus A."/>
            <person name="Barry K."/>
            <person name="Detter J.C."/>
            <person name="Glavina del Rio T."/>
            <person name="Hammon N."/>
            <person name="Israni S."/>
            <person name="Dalin E."/>
            <person name="Tice H."/>
            <person name="Pitluck S."/>
            <person name="Chain P."/>
            <person name="Malfatti S."/>
            <person name="Shin M."/>
            <person name="Vergez L."/>
            <person name="Schmutz J."/>
            <person name="Larimer F."/>
            <person name="Land M."/>
            <person name="Hauser L."/>
            <person name="Kyrpides N."/>
            <person name="Ivanova N."/>
            <person name="Tomasz A."/>
            <person name="Richardson P."/>
        </authorList>
    </citation>
    <scope>NUCLEOTIDE SEQUENCE [LARGE SCALE GENOMIC DNA]</scope>
    <source>
        <strain>JH1</strain>
    </source>
</reference>
<name>RS7_STAA2</name>